<protein>
    <recommendedName>
        <fullName>Riboflavin kinase</fullName>
        <shortName>RFK</shortName>
        <ecNumber>2.7.1.161</ecNumber>
    </recommendedName>
    <alternativeName>
        <fullName>CTP-dependent riboflavin kinase</fullName>
    </alternativeName>
    <alternativeName>
        <fullName>CTP:riboflavin 5'-phosphotransferase</fullName>
    </alternativeName>
    <alternativeName>
        <fullName>Flavokinase</fullName>
    </alternativeName>
</protein>
<dbReference type="EC" id="2.7.1.161"/>
<dbReference type="EMBL" id="AE004437">
    <property type="protein sequence ID" value="AAG20266.1"/>
    <property type="status" value="ALT_INIT"/>
    <property type="molecule type" value="Genomic_DNA"/>
</dbReference>
<dbReference type="PIR" id="F84362">
    <property type="entry name" value="F84362"/>
</dbReference>
<dbReference type="RefSeq" id="WP_012289437.1">
    <property type="nucleotide sequence ID" value="NC_002607.1"/>
</dbReference>
<dbReference type="SMR" id="Q9HNF4"/>
<dbReference type="FunCoup" id="Q9HNF4">
    <property type="interactions" value="17"/>
</dbReference>
<dbReference type="STRING" id="64091.VNG_2126C"/>
<dbReference type="PaxDb" id="64091-VNG_2126C"/>
<dbReference type="KEGG" id="hal:VNG_2126C"/>
<dbReference type="PATRIC" id="fig|64091.14.peg.1626"/>
<dbReference type="HOGENOM" id="CLU_088476_0_0_2"/>
<dbReference type="InParanoid" id="Q9HNF4"/>
<dbReference type="OrthoDB" id="30955at2157"/>
<dbReference type="PhylomeDB" id="Q9HNF4"/>
<dbReference type="UniPathway" id="UPA00276">
    <property type="reaction ID" value="UER00929"/>
</dbReference>
<dbReference type="Proteomes" id="UP000000554">
    <property type="component" value="Chromosome"/>
</dbReference>
<dbReference type="GO" id="GO:0046872">
    <property type="term" value="F:metal ion binding"/>
    <property type="evidence" value="ECO:0007669"/>
    <property type="project" value="UniProtKB-KW"/>
</dbReference>
<dbReference type="GO" id="GO:0000166">
    <property type="term" value="F:nucleotide binding"/>
    <property type="evidence" value="ECO:0007669"/>
    <property type="project" value="UniProtKB-KW"/>
</dbReference>
<dbReference type="GO" id="GO:0008531">
    <property type="term" value="F:riboflavin kinase activity"/>
    <property type="evidence" value="ECO:0007669"/>
    <property type="project" value="InterPro"/>
</dbReference>
<dbReference type="GO" id="GO:0009398">
    <property type="term" value="P:FMN biosynthetic process"/>
    <property type="evidence" value="ECO:0007669"/>
    <property type="project" value="UniProtKB-UniPathway"/>
</dbReference>
<dbReference type="GO" id="GO:0009231">
    <property type="term" value="P:riboflavin biosynthetic process"/>
    <property type="evidence" value="ECO:0007669"/>
    <property type="project" value="InterPro"/>
</dbReference>
<dbReference type="Gene3D" id="2.40.30.30">
    <property type="entry name" value="Riboflavin kinase-like"/>
    <property type="match status" value="1"/>
</dbReference>
<dbReference type="Gene3D" id="1.10.10.10">
    <property type="entry name" value="Winged helix-like DNA-binding domain superfamily/Winged helix DNA-binding domain"/>
    <property type="match status" value="1"/>
</dbReference>
<dbReference type="InterPro" id="IPR039063">
    <property type="entry name" value="RibK_CTP-dep"/>
</dbReference>
<dbReference type="InterPro" id="IPR023602">
    <property type="entry name" value="Riboflavin_kinase_CTP-dep"/>
</dbReference>
<dbReference type="InterPro" id="IPR023465">
    <property type="entry name" value="Riboflavin_kinase_dom_sf"/>
</dbReference>
<dbReference type="InterPro" id="IPR036388">
    <property type="entry name" value="WH-like_DNA-bd_sf"/>
</dbReference>
<dbReference type="InterPro" id="IPR036390">
    <property type="entry name" value="WH_DNA-bd_sf"/>
</dbReference>
<dbReference type="PANTHER" id="PTHR40706">
    <property type="entry name" value="RIBOFLAVIN KINASE"/>
    <property type="match status" value="1"/>
</dbReference>
<dbReference type="PANTHER" id="PTHR40706:SF1">
    <property type="entry name" value="RIBOFLAVIN KINASE"/>
    <property type="match status" value="1"/>
</dbReference>
<dbReference type="Pfam" id="PF01982">
    <property type="entry name" value="CTP-dep_RFKase"/>
    <property type="match status" value="1"/>
</dbReference>
<dbReference type="SUPFAM" id="SSF82114">
    <property type="entry name" value="Riboflavin kinase-like"/>
    <property type="match status" value="1"/>
</dbReference>
<dbReference type="SUPFAM" id="SSF46785">
    <property type="entry name" value="Winged helix' DNA-binding domain"/>
    <property type="match status" value="1"/>
</dbReference>
<accession>Q9HNF4</accession>
<reference key="1">
    <citation type="journal article" date="2000" name="Proc. Natl. Acad. Sci. U.S.A.">
        <title>Genome sequence of Halobacterium species NRC-1.</title>
        <authorList>
            <person name="Ng W.V."/>
            <person name="Kennedy S.P."/>
            <person name="Mahairas G.G."/>
            <person name="Berquist B."/>
            <person name="Pan M."/>
            <person name="Shukla H.D."/>
            <person name="Lasky S.R."/>
            <person name="Baliga N.S."/>
            <person name="Thorsson V."/>
            <person name="Sbrogna J."/>
            <person name="Swartzell S."/>
            <person name="Weir D."/>
            <person name="Hall J."/>
            <person name="Dahl T.A."/>
            <person name="Welti R."/>
            <person name="Goo Y.A."/>
            <person name="Leithauser B."/>
            <person name="Keller K."/>
            <person name="Cruz R."/>
            <person name="Danson M.J."/>
            <person name="Hough D.W."/>
            <person name="Maddocks D.G."/>
            <person name="Jablonski P.E."/>
            <person name="Krebs M.P."/>
            <person name="Angevine C.M."/>
            <person name="Dale H."/>
            <person name="Isenbarger T.A."/>
            <person name="Peck R.F."/>
            <person name="Pohlschroder M."/>
            <person name="Spudich J.L."/>
            <person name="Jung K.-H."/>
            <person name="Alam M."/>
            <person name="Freitas T."/>
            <person name="Hou S."/>
            <person name="Daniels C.J."/>
            <person name="Dennis P.P."/>
            <person name="Omer A.D."/>
            <person name="Ebhardt H."/>
            <person name="Lowe T.M."/>
            <person name="Liang P."/>
            <person name="Riley M."/>
            <person name="Hood L."/>
            <person name="DasSarma S."/>
        </authorList>
    </citation>
    <scope>NUCLEOTIDE SEQUENCE [LARGE SCALE GENOMIC DNA]</scope>
    <source>
        <strain>ATCC 700922 / JCM 11081 / NRC-1</strain>
    </source>
</reference>
<organism>
    <name type="scientific">Halobacterium salinarum (strain ATCC 700922 / JCM 11081 / NRC-1)</name>
    <name type="common">Halobacterium halobium</name>
    <dbReference type="NCBI Taxonomy" id="64091"/>
    <lineage>
        <taxon>Archaea</taxon>
        <taxon>Methanobacteriati</taxon>
        <taxon>Methanobacteriota</taxon>
        <taxon>Stenosarchaea group</taxon>
        <taxon>Halobacteria</taxon>
        <taxon>Halobacteriales</taxon>
        <taxon>Halobacteriaceae</taxon>
        <taxon>Halobacterium</taxon>
        <taxon>Halobacterium salinarum NRC-34001</taxon>
    </lineage>
</organism>
<keyword id="KW-0285">Flavoprotein</keyword>
<keyword id="KW-0288">FMN</keyword>
<keyword id="KW-0418">Kinase</keyword>
<keyword id="KW-0460">Magnesium</keyword>
<keyword id="KW-0479">Metal-binding</keyword>
<keyword id="KW-0547">Nucleotide-binding</keyword>
<keyword id="KW-1185">Reference proteome</keyword>
<keyword id="KW-0808">Transferase</keyword>
<name>RIFK_HALSA</name>
<comment type="function">
    <text evidence="1">Catalyzes the CTP-dependent phosphorylation of riboflavin (vitamin B2) to form flavin mononucleotide (FMN).</text>
</comment>
<comment type="catalytic activity">
    <reaction>
        <text>riboflavin + CTP = CDP + FMN + H(+)</text>
        <dbReference type="Rhea" id="RHEA:25021"/>
        <dbReference type="ChEBI" id="CHEBI:15378"/>
        <dbReference type="ChEBI" id="CHEBI:37563"/>
        <dbReference type="ChEBI" id="CHEBI:57986"/>
        <dbReference type="ChEBI" id="CHEBI:58069"/>
        <dbReference type="ChEBI" id="CHEBI:58210"/>
        <dbReference type="EC" id="2.7.1.161"/>
    </reaction>
</comment>
<comment type="cofactor">
    <cofactor evidence="1">
        <name>Mg(2+)</name>
        <dbReference type="ChEBI" id="CHEBI:18420"/>
    </cofactor>
    <text evidence="1">Binds 1 Mg(2+) ion per subunit.</text>
</comment>
<comment type="pathway">
    <text>Cofactor biosynthesis; FMN biosynthesis; FMN from riboflavin (CTP route): step 1/1.</text>
</comment>
<comment type="similarity">
    <text evidence="2">Belongs to the archaeal riboflavin kinase family.</text>
</comment>
<comment type="sequence caution" evidence="2">
    <conflict type="erroneous initiation">
        <sequence resource="EMBL-CDS" id="AAG20266"/>
    </conflict>
    <text>Extended N-terminus.</text>
</comment>
<evidence type="ECO:0000250" key="1"/>
<evidence type="ECO:0000305" key="2"/>
<proteinExistence type="inferred from homology"/>
<gene>
    <name type="primary">ribK</name>
    <name type="ordered locus">VNG_2126C</name>
</gene>
<sequence length="233" mass="25356">MSGATSTGDVGYDELAVLKLLALDGAHRGEVKVSCGDLASRLDASSQTASRRLQALDDADHVTRDLVSDGQWITVTDAGRHALKHEYEDYRRIFEDPGELALAGTVTSGMGEGRHYISLPGYNRQFAEKLGYEPYPGTLNVDLPPDGQRARAGIQALDGVDIDAWEDEDRTYGSATCYACTVVGDGTDFDGAHVIIPDRTHHDDDQLEIIAPVKLRERLGLLDDDEVTIRVEA</sequence>
<feature type="chain" id="PRO_0000322085" description="Riboflavin kinase">
    <location>
        <begin position="1"/>
        <end position="233"/>
    </location>
</feature>
<feature type="region of interest" description="Unknown">
    <location>
        <begin position="1"/>
        <end position="99"/>
    </location>
</feature>
<feature type="region of interest" description="Riboflavin kinase">
    <location>
        <begin position="100"/>
        <end position="233"/>
    </location>
</feature>
<feature type="binding site" evidence="1">
    <location>
        <begin position="109"/>
        <end position="114"/>
    </location>
    <ligand>
        <name>CDP</name>
        <dbReference type="ChEBI" id="CHEBI:58069"/>
    </ligand>
</feature>
<feature type="binding site" evidence="1">
    <location>
        <position position="138"/>
    </location>
    <ligand>
        <name>Mg(2+)</name>
        <dbReference type="ChEBI" id="CHEBI:18420"/>
    </ligand>
</feature>
<feature type="binding site" evidence="1">
    <location>
        <position position="140"/>
    </location>
    <ligand>
        <name>Mg(2+)</name>
        <dbReference type="ChEBI" id="CHEBI:18420"/>
    </ligand>
</feature>
<feature type="binding site" evidence="1">
    <location>
        <position position="200"/>
    </location>
    <ligand>
        <name>FMN</name>
        <dbReference type="ChEBI" id="CHEBI:58210"/>
    </ligand>
</feature>
<feature type="binding site" evidence="1">
    <location>
        <position position="208"/>
    </location>
    <ligand>
        <name>FMN</name>
        <dbReference type="ChEBI" id="CHEBI:58210"/>
    </ligand>
</feature>
<feature type="binding site" evidence="1">
    <location>
        <begin position="213"/>
        <end position="216"/>
    </location>
    <ligand>
        <name>CDP</name>
        <dbReference type="ChEBI" id="CHEBI:58069"/>
    </ligand>
</feature>